<proteinExistence type="inferred from homology"/>
<dbReference type="EC" id="7.3.2.1" evidence="1"/>
<dbReference type="EMBL" id="BA000043">
    <property type="protein sequence ID" value="BAD76739.1"/>
    <property type="molecule type" value="Genomic_DNA"/>
</dbReference>
<dbReference type="SMR" id="Q5KX47"/>
<dbReference type="STRING" id="235909.GK2454"/>
<dbReference type="KEGG" id="gka:GK2454"/>
<dbReference type="eggNOG" id="COG1117">
    <property type="taxonomic scope" value="Bacteria"/>
</dbReference>
<dbReference type="HOGENOM" id="CLU_000604_1_22_9"/>
<dbReference type="Proteomes" id="UP000001172">
    <property type="component" value="Chromosome"/>
</dbReference>
<dbReference type="GO" id="GO:0005886">
    <property type="term" value="C:plasma membrane"/>
    <property type="evidence" value="ECO:0007669"/>
    <property type="project" value="UniProtKB-SubCell"/>
</dbReference>
<dbReference type="GO" id="GO:0005524">
    <property type="term" value="F:ATP binding"/>
    <property type="evidence" value="ECO:0007669"/>
    <property type="project" value="UniProtKB-KW"/>
</dbReference>
<dbReference type="GO" id="GO:0016887">
    <property type="term" value="F:ATP hydrolysis activity"/>
    <property type="evidence" value="ECO:0007669"/>
    <property type="project" value="InterPro"/>
</dbReference>
<dbReference type="GO" id="GO:0015415">
    <property type="term" value="F:ATPase-coupled phosphate ion transmembrane transporter activity"/>
    <property type="evidence" value="ECO:0007669"/>
    <property type="project" value="UniProtKB-EC"/>
</dbReference>
<dbReference type="GO" id="GO:0035435">
    <property type="term" value="P:phosphate ion transmembrane transport"/>
    <property type="evidence" value="ECO:0007669"/>
    <property type="project" value="InterPro"/>
</dbReference>
<dbReference type="CDD" id="cd03260">
    <property type="entry name" value="ABC_PstB_phosphate_transporter"/>
    <property type="match status" value="1"/>
</dbReference>
<dbReference type="Gene3D" id="3.40.50.300">
    <property type="entry name" value="P-loop containing nucleotide triphosphate hydrolases"/>
    <property type="match status" value="1"/>
</dbReference>
<dbReference type="InterPro" id="IPR003593">
    <property type="entry name" value="AAA+_ATPase"/>
</dbReference>
<dbReference type="InterPro" id="IPR003439">
    <property type="entry name" value="ABC_transporter-like_ATP-bd"/>
</dbReference>
<dbReference type="InterPro" id="IPR017871">
    <property type="entry name" value="ABC_transporter-like_CS"/>
</dbReference>
<dbReference type="InterPro" id="IPR027417">
    <property type="entry name" value="P-loop_NTPase"/>
</dbReference>
<dbReference type="InterPro" id="IPR005670">
    <property type="entry name" value="PstB-like"/>
</dbReference>
<dbReference type="NCBIfam" id="TIGR00972">
    <property type="entry name" value="3a0107s01c2"/>
    <property type="match status" value="1"/>
</dbReference>
<dbReference type="PANTHER" id="PTHR43423">
    <property type="entry name" value="ABC TRANSPORTER I FAMILY MEMBER 17"/>
    <property type="match status" value="1"/>
</dbReference>
<dbReference type="PANTHER" id="PTHR43423:SF1">
    <property type="entry name" value="ABC TRANSPORTER I FAMILY MEMBER 17"/>
    <property type="match status" value="1"/>
</dbReference>
<dbReference type="Pfam" id="PF00005">
    <property type="entry name" value="ABC_tran"/>
    <property type="match status" value="1"/>
</dbReference>
<dbReference type="SMART" id="SM00382">
    <property type="entry name" value="AAA"/>
    <property type="match status" value="1"/>
</dbReference>
<dbReference type="SUPFAM" id="SSF52540">
    <property type="entry name" value="P-loop containing nucleoside triphosphate hydrolases"/>
    <property type="match status" value="1"/>
</dbReference>
<dbReference type="PROSITE" id="PS00211">
    <property type="entry name" value="ABC_TRANSPORTER_1"/>
    <property type="match status" value="1"/>
</dbReference>
<dbReference type="PROSITE" id="PS50893">
    <property type="entry name" value="ABC_TRANSPORTER_2"/>
    <property type="match status" value="1"/>
</dbReference>
<dbReference type="PROSITE" id="PS51238">
    <property type="entry name" value="PSTB"/>
    <property type="match status" value="1"/>
</dbReference>
<accession>Q5KX47</accession>
<name>PSTB_GEOKA</name>
<keyword id="KW-0067">ATP-binding</keyword>
<keyword id="KW-1003">Cell membrane</keyword>
<keyword id="KW-0472">Membrane</keyword>
<keyword id="KW-0547">Nucleotide-binding</keyword>
<keyword id="KW-0592">Phosphate transport</keyword>
<keyword id="KW-1185">Reference proteome</keyword>
<keyword id="KW-1278">Translocase</keyword>
<keyword id="KW-0813">Transport</keyword>
<organism>
    <name type="scientific">Geobacillus kaustophilus (strain HTA426)</name>
    <dbReference type="NCBI Taxonomy" id="235909"/>
    <lineage>
        <taxon>Bacteria</taxon>
        <taxon>Bacillati</taxon>
        <taxon>Bacillota</taxon>
        <taxon>Bacilli</taxon>
        <taxon>Bacillales</taxon>
        <taxon>Anoxybacillaceae</taxon>
        <taxon>Geobacillus</taxon>
        <taxon>Geobacillus thermoleovorans group</taxon>
    </lineage>
</organism>
<gene>
    <name evidence="1" type="primary">pstB</name>
    <name type="ordered locus">GK2454</name>
</gene>
<sequence length="272" mass="31051">MSTMAVVERRKEDIPSAQLVKKEVVYETNGLNVWYGEHHALKHIHLSFYEREITAIIGPSGCGKSTYIKTLNRMIELIPNVRLEGEILYRGRRIFDTSYPVEQLRTQVGMVFQKPNPFPKSIYDNVAYGPRIHGIRDRRRLDEIVEKSLRQAALWEEVKDRLHENALGLSGGQQQRLCIARCLAVEPDVILMDEPTSALDPISTAKVEELMGELKTKYSIIIVTHNMQQAARISDRTAFFLNGEVIEYGETKTLFSRPADQRTADYIAGRFG</sequence>
<evidence type="ECO:0000255" key="1">
    <source>
        <dbReference type="HAMAP-Rule" id="MF_01702"/>
    </source>
</evidence>
<reference key="1">
    <citation type="journal article" date="2004" name="Nucleic Acids Res.">
        <title>Thermoadaptation trait revealed by the genome sequence of thermophilic Geobacillus kaustophilus.</title>
        <authorList>
            <person name="Takami H."/>
            <person name="Takaki Y."/>
            <person name="Chee G.-J."/>
            <person name="Nishi S."/>
            <person name="Shimamura S."/>
            <person name="Suzuki H."/>
            <person name="Matsui S."/>
            <person name="Uchiyama I."/>
        </authorList>
    </citation>
    <scope>NUCLEOTIDE SEQUENCE [LARGE SCALE GENOMIC DNA]</scope>
    <source>
        <strain>HTA426</strain>
    </source>
</reference>
<protein>
    <recommendedName>
        <fullName evidence="1">Phosphate import ATP-binding protein PstB</fullName>
        <ecNumber evidence="1">7.3.2.1</ecNumber>
    </recommendedName>
    <alternativeName>
        <fullName evidence="1">ABC phosphate transporter</fullName>
    </alternativeName>
    <alternativeName>
        <fullName evidence="1">Phosphate-transporting ATPase</fullName>
    </alternativeName>
</protein>
<feature type="chain" id="PRO_0000272455" description="Phosphate import ATP-binding protein PstB">
    <location>
        <begin position="1"/>
        <end position="272"/>
    </location>
</feature>
<feature type="domain" description="ABC transporter" evidence="1">
    <location>
        <begin position="20"/>
        <end position="267"/>
    </location>
</feature>
<feature type="binding site" evidence="1">
    <location>
        <begin position="58"/>
        <end position="65"/>
    </location>
    <ligand>
        <name>ATP</name>
        <dbReference type="ChEBI" id="CHEBI:30616"/>
    </ligand>
</feature>
<comment type="function">
    <text evidence="1">Part of the ABC transporter complex PstSACB involved in phosphate import. Responsible for energy coupling to the transport system.</text>
</comment>
<comment type="catalytic activity">
    <reaction evidence="1">
        <text>phosphate(out) + ATP + H2O = ADP + 2 phosphate(in) + H(+)</text>
        <dbReference type="Rhea" id="RHEA:24440"/>
        <dbReference type="ChEBI" id="CHEBI:15377"/>
        <dbReference type="ChEBI" id="CHEBI:15378"/>
        <dbReference type="ChEBI" id="CHEBI:30616"/>
        <dbReference type="ChEBI" id="CHEBI:43474"/>
        <dbReference type="ChEBI" id="CHEBI:456216"/>
        <dbReference type="EC" id="7.3.2.1"/>
    </reaction>
</comment>
<comment type="subunit">
    <text evidence="1">The complex is composed of two ATP-binding proteins (PstB), two transmembrane proteins (PstC and PstA) and a solute-binding protein (PstS).</text>
</comment>
<comment type="subcellular location">
    <subcellularLocation>
        <location evidence="1">Cell membrane</location>
        <topology evidence="1">Peripheral membrane protein</topology>
    </subcellularLocation>
</comment>
<comment type="similarity">
    <text evidence="1">Belongs to the ABC transporter superfamily. Phosphate importer (TC 3.A.1.7) family.</text>
</comment>